<accession>Q21FL7</accession>
<feature type="chain" id="PRO_0000244241" description="Large ribosomal subunit protein bL25">
    <location>
        <begin position="1"/>
        <end position="210"/>
    </location>
</feature>
<reference key="1">
    <citation type="journal article" date="2008" name="PLoS Genet.">
        <title>Complete genome sequence of the complex carbohydrate-degrading marine bacterium, Saccharophagus degradans strain 2-40 T.</title>
        <authorList>
            <person name="Weiner R.M."/>
            <person name="Taylor L.E. II"/>
            <person name="Henrissat B."/>
            <person name="Hauser L."/>
            <person name="Land M."/>
            <person name="Coutinho P.M."/>
            <person name="Rancurel C."/>
            <person name="Saunders E.H."/>
            <person name="Longmire A.G."/>
            <person name="Zhang H."/>
            <person name="Bayer E.A."/>
            <person name="Gilbert H.J."/>
            <person name="Larimer F."/>
            <person name="Zhulin I.B."/>
            <person name="Ekborg N.A."/>
            <person name="Lamed R."/>
            <person name="Richardson P.M."/>
            <person name="Borovok I."/>
            <person name="Hutcheson S."/>
        </authorList>
    </citation>
    <scope>NUCLEOTIDE SEQUENCE [LARGE SCALE GENOMIC DNA]</scope>
    <source>
        <strain>2-40 / ATCC 43961 / DSM 17024</strain>
    </source>
</reference>
<sequence>MSNEDFILNAEARDVSGKGASRRLRREAGLVPAIVYGGRKNPQNVTITLRELTKHLENEAFYSHIITLNIGDSSEQVILKDLQRHPATNFAMHADFLRVSKTKKFNTKVPLHFINEATSKGVKEQGGKVQHSMTELEIACLPADLPEFIEVDLANVELGGIVHISDIVLPKGVESIALQQGEDHDLPVASIFKPKGVAGDEDEEAEGDAE</sequence>
<name>RL25_SACD2</name>
<organism>
    <name type="scientific">Saccharophagus degradans (strain 2-40 / ATCC 43961 / DSM 17024)</name>
    <dbReference type="NCBI Taxonomy" id="203122"/>
    <lineage>
        <taxon>Bacteria</taxon>
        <taxon>Pseudomonadati</taxon>
        <taxon>Pseudomonadota</taxon>
        <taxon>Gammaproteobacteria</taxon>
        <taxon>Cellvibrionales</taxon>
        <taxon>Cellvibrionaceae</taxon>
        <taxon>Saccharophagus</taxon>
    </lineage>
</organism>
<gene>
    <name evidence="1" type="primary">rplY</name>
    <name evidence="1" type="synonym">ctc</name>
    <name type="ordered locus">Sde_3257</name>
</gene>
<dbReference type="EMBL" id="CP000282">
    <property type="protein sequence ID" value="ABD82512.1"/>
    <property type="molecule type" value="Genomic_DNA"/>
</dbReference>
<dbReference type="RefSeq" id="WP_011469728.1">
    <property type="nucleotide sequence ID" value="NC_007912.1"/>
</dbReference>
<dbReference type="SMR" id="Q21FL7"/>
<dbReference type="STRING" id="203122.Sde_3257"/>
<dbReference type="GeneID" id="98614878"/>
<dbReference type="KEGG" id="sde:Sde_3257"/>
<dbReference type="eggNOG" id="COG1825">
    <property type="taxonomic scope" value="Bacteria"/>
</dbReference>
<dbReference type="HOGENOM" id="CLU_075939_0_1_6"/>
<dbReference type="OrthoDB" id="9806411at2"/>
<dbReference type="Proteomes" id="UP000001947">
    <property type="component" value="Chromosome"/>
</dbReference>
<dbReference type="GO" id="GO:0022625">
    <property type="term" value="C:cytosolic large ribosomal subunit"/>
    <property type="evidence" value="ECO:0007669"/>
    <property type="project" value="TreeGrafter"/>
</dbReference>
<dbReference type="GO" id="GO:0008097">
    <property type="term" value="F:5S rRNA binding"/>
    <property type="evidence" value="ECO:0007669"/>
    <property type="project" value="InterPro"/>
</dbReference>
<dbReference type="GO" id="GO:0003735">
    <property type="term" value="F:structural constituent of ribosome"/>
    <property type="evidence" value="ECO:0007669"/>
    <property type="project" value="InterPro"/>
</dbReference>
<dbReference type="GO" id="GO:0006412">
    <property type="term" value="P:translation"/>
    <property type="evidence" value="ECO:0007669"/>
    <property type="project" value="UniProtKB-UniRule"/>
</dbReference>
<dbReference type="CDD" id="cd00495">
    <property type="entry name" value="Ribosomal_L25_TL5_CTC"/>
    <property type="match status" value="1"/>
</dbReference>
<dbReference type="Gene3D" id="2.170.120.20">
    <property type="entry name" value="Ribosomal protein L25, beta domain"/>
    <property type="match status" value="1"/>
</dbReference>
<dbReference type="Gene3D" id="2.40.240.10">
    <property type="entry name" value="Ribosomal Protein L25, Chain P"/>
    <property type="match status" value="1"/>
</dbReference>
<dbReference type="HAMAP" id="MF_01334">
    <property type="entry name" value="Ribosomal_bL25_CTC"/>
    <property type="match status" value="1"/>
</dbReference>
<dbReference type="InterPro" id="IPR020056">
    <property type="entry name" value="Rbsml_bL25/Gln-tRNA_synth_N"/>
</dbReference>
<dbReference type="InterPro" id="IPR011035">
    <property type="entry name" value="Ribosomal_bL25/Gln-tRNA_synth"/>
</dbReference>
<dbReference type="InterPro" id="IPR020057">
    <property type="entry name" value="Ribosomal_bL25_b-dom"/>
</dbReference>
<dbReference type="InterPro" id="IPR037121">
    <property type="entry name" value="Ribosomal_bL25_C"/>
</dbReference>
<dbReference type="InterPro" id="IPR001021">
    <property type="entry name" value="Ribosomal_bL25_long"/>
</dbReference>
<dbReference type="InterPro" id="IPR029751">
    <property type="entry name" value="Ribosomal_L25_dom"/>
</dbReference>
<dbReference type="InterPro" id="IPR020930">
    <property type="entry name" value="Ribosomal_uL5_bac-type"/>
</dbReference>
<dbReference type="NCBIfam" id="TIGR00731">
    <property type="entry name" value="bL25_bact_ctc"/>
    <property type="match status" value="1"/>
</dbReference>
<dbReference type="NCBIfam" id="NF004128">
    <property type="entry name" value="PRK05618.1-2"/>
    <property type="match status" value="1"/>
</dbReference>
<dbReference type="NCBIfam" id="NF004130">
    <property type="entry name" value="PRK05618.1-5"/>
    <property type="match status" value="1"/>
</dbReference>
<dbReference type="NCBIfam" id="NF004612">
    <property type="entry name" value="PRK05943.1"/>
    <property type="match status" value="1"/>
</dbReference>
<dbReference type="PANTHER" id="PTHR33284">
    <property type="entry name" value="RIBOSOMAL PROTEIN L25/GLN-TRNA SYNTHETASE, ANTI-CODON-BINDING DOMAIN-CONTAINING PROTEIN"/>
    <property type="match status" value="1"/>
</dbReference>
<dbReference type="PANTHER" id="PTHR33284:SF1">
    <property type="entry name" value="RIBOSOMAL PROTEIN L25_GLN-TRNA SYNTHETASE, ANTI-CODON-BINDING DOMAIN-CONTAINING PROTEIN"/>
    <property type="match status" value="1"/>
</dbReference>
<dbReference type="Pfam" id="PF01386">
    <property type="entry name" value="Ribosomal_L25p"/>
    <property type="match status" value="1"/>
</dbReference>
<dbReference type="Pfam" id="PF14693">
    <property type="entry name" value="Ribosomal_TL5_C"/>
    <property type="match status" value="1"/>
</dbReference>
<dbReference type="SUPFAM" id="SSF50715">
    <property type="entry name" value="Ribosomal protein L25-like"/>
    <property type="match status" value="1"/>
</dbReference>
<keyword id="KW-1185">Reference proteome</keyword>
<keyword id="KW-0687">Ribonucleoprotein</keyword>
<keyword id="KW-0689">Ribosomal protein</keyword>
<keyword id="KW-0694">RNA-binding</keyword>
<keyword id="KW-0699">rRNA-binding</keyword>
<protein>
    <recommendedName>
        <fullName evidence="1">Large ribosomal subunit protein bL25</fullName>
    </recommendedName>
    <alternativeName>
        <fullName evidence="2">50S ribosomal protein L25</fullName>
    </alternativeName>
    <alternativeName>
        <fullName evidence="1">General stress protein CTC</fullName>
    </alternativeName>
</protein>
<comment type="function">
    <text evidence="1">This is one of the proteins that binds to the 5S RNA in the ribosome where it forms part of the central protuberance.</text>
</comment>
<comment type="subunit">
    <text evidence="1">Part of the 50S ribosomal subunit; part of the 5S rRNA/L5/L18/L25 subcomplex. Contacts the 5S rRNA. Binds to the 5S rRNA independently of L5 and L18.</text>
</comment>
<comment type="similarity">
    <text evidence="1">Belongs to the bacterial ribosomal protein bL25 family. CTC subfamily.</text>
</comment>
<proteinExistence type="inferred from homology"/>
<evidence type="ECO:0000255" key="1">
    <source>
        <dbReference type="HAMAP-Rule" id="MF_01334"/>
    </source>
</evidence>
<evidence type="ECO:0000305" key="2"/>